<name>SEC11_ZYGRC</name>
<reference key="1">
    <citation type="journal article" date="2009" name="Genome Res.">
        <title>Comparative genomics of protoploid Saccharomycetaceae.</title>
        <authorList>
            <consortium name="The Genolevures Consortium"/>
            <person name="Souciet J.-L."/>
            <person name="Dujon B."/>
            <person name="Gaillardin C."/>
            <person name="Johnston M."/>
            <person name="Baret P.V."/>
            <person name="Cliften P."/>
            <person name="Sherman D.J."/>
            <person name="Weissenbach J."/>
            <person name="Westhof E."/>
            <person name="Wincker P."/>
            <person name="Jubin C."/>
            <person name="Poulain J."/>
            <person name="Barbe V."/>
            <person name="Segurens B."/>
            <person name="Artiguenave F."/>
            <person name="Anthouard V."/>
            <person name="Vacherie B."/>
            <person name="Val M.-E."/>
            <person name="Fulton R.S."/>
            <person name="Minx P."/>
            <person name="Wilson R."/>
            <person name="Durrens P."/>
            <person name="Jean G."/>
            <person name="Marck C."/>
            <person name="Martin T."/>
            <person name="Nikolski M."/>
            <person name="Rolland T."/>
            <person name="Seret M.-L."/>
            <person name="Casaregola S."/>
            <person name="Despons L."/>
            <person name="Fairhead C."/>
            <person name="Fischer G."/>
            <person name="Lafontaine I."/>
            <person name="Leh V."/>
            <person name="Lemaire M."/>
            <person name="de Montigny J."/>
            <person name="Neuveglise C."/>
            <person name="Thierry A."/>
            <person name="Blanc-Lenfle I."/>
            <person name="Bleykasten C."/>
            <person name="Diffels J."/>
            <person name="Fritsch E."/>
            <person name="Frangeul L."/>
            <person name="Goeffon A."/>
            <person name="Jauniaux N."/>
            <person name="Kachouri-Lafond R."/>
            <person name="Payen C."/>
            <person name="Potier S."/>
            <person name="Pribylova L."/>
            <person name="Ozanne C."/>
            <person name="Richard G.-F."/>
            <person name="Sacerdot C."/>
            <person name="Straub M.-L."/>
            <person name="Talla E."/>
        </authorList>
    </citation>
    <scope>NUCLEOTIDE SEQUENCE [LARGE SCALE GENOMIC DNA]</scope>
    <source>
        <strain>ATCC 2623 / CBS 732 / BCRC 21506 / NBRC 1130 / NCYC 568 / NRRL Y-229</strain>
    </source>
</reference>
<keyword id="KW-0256">Endoplasmic reticulum</keyword>
<keyword id="KW-0378">Hydrolase</keyword>
<keyword id="KW-0472">Membrane</keyword>
<keyword id="KW-0645">Protease</keyword>
<keyword id="KW-1185">Reference proteome</keyword>
<keyword id="KW-0735">Signal-anchor</keyword>
<keyword id="KW-0812">Transmembrane</keyword>
<keyword id="KW-1133">Transmembrane helix</keyword>
<organism>
    <name type="scientific">Zygosaccharomyces rouxii (strain ATCC 2623 / CBS 732 / NBRC 1130 / NCYC 568 / NRRL Y-229)</name>
    <dbReference type="NCBI Taxonomy" id="559307"/>
    <lineage>
        <taxon>Eukaryota</taxon>
        <taxon>Fungi</taxon>
        <taxon>Dikarya</taxon>
        <taxon>Ascomycota</taxon>
        <taxon>Saccharomycotina</taxon>
        <taxon>Saccharomycetes</taxon>
        <taxon>Saccharomycetales</taxon>
        <taxon>Saccharomycetaceae</taxon>
        <taxon>Zygosaccharomyces</taxon>
    </lineage>
</organism>
<comment type="function">
    <text evidence="1 2">Catalytic component of the signal peptidase complex (SPC) which catalyzes the cleavage of N-terminal signal sequences from nascent proteins as they are translocated into the lumen of the endoplasmic reticulum (By similarity). Specifically cleaves N-terminal signal peptides that contain a hydrophobic alpha-helix (h-region) shorter than 18-20 amino acids (By similarity).</text>
</comment>
<comment type="catalytic activity">
    <reaction evidence="1">
        <text>Cleavage of hydrophobic, N-terminal signal or leader sequences from secreted and periplasmic proteins.</text>
        <dbReference type="EC" id="3.4.21.89"/>
    </reaction>
</comment>
<comment type="subunit">
    <text evidence="1 2">Component of the signal peptidase complex (SPC) composed of a catalytic subunit SEC11 and three accessory subunits SPC1, SPC2 and SPC3 (By similarity). The complex induces a local thinning of the ER membrane which is used to measure the length of the signal peptide (SP) h-region of protein substrates. This ensures the selectivity of the complex towards h-regions shorter than 18-20 amino acids (By similarity). SPC associates with the translocon complex (By similarity).</text>
</comment>
<comment type="subcellular location">
    <subcellularLocation>
        <location evidence="1">Endoplasmic reticulum membrane</location>
        <topology evidence="1">Single-pass type II membrane protein</topology>
    </subcellularLocation>
</comment>
<comment type="domain">
    <text evidence="2">The C-terminal short (CTS) helix is essential for catalytic activity. It may be accommodated as a transmembrane helix in the thinned membrane environment of the complex, similarly to the signal peptide in the complex substrates.</text>
</comment>
<comment type="similarity">
    <text evidence="4">Belongs to the peptidase S26B family.</text>
</comment>
<evidence type="ECO:0000250" key="1">
    <source>
        <dbReference type="UniProtKB" id="P15367"/>
    </source>
</evidence>
<evidence type="ECO:0000250" key="2">
    <source>
        <dbReference type="UniProtKB" id="P67812"/>
    </source>
</evidence>
<evidence type="ECO:0000255" key="3"/>
<evidence type="ECO:0000305" key="4"/>
<dbReference type="EC" id="3.4.21.89" evidence="1"/>
<dbReference type="EMBL" id="CU928181">
    <property type="protein sequence ID" value="CAR30722.1"/>
    <property type="molecule type" value="Genomic_DNA"/>
</dbReference>
<dbReference type="RefSeq" id="XP_002498977.1">
    <property type="nucleotide sequence ID" value="XM_002498932.1"/>
</dbReference>
<dbReference type="SMR" id="C5E3W1"/>
<dbReference type="FunCoup" id="C5E3W1">
    <property type="interactions" value="692"/>
</dbReference>
<dbReference type="STRING" id="559307.C5E3W1"/>
<dbReference type="MEROPS" id="S26.010"/>
<dbReference type="GeneID" id="8204509"/>
<dbReference type="KEGG" id="zro:ZYRO0E00704g"/>
<dbReference type="HOGENOM" id="CLU_089996_0_0_1"/>
<dbReference type="InParanoid" id="C5E3W1"/>
<dbReference type="Proteomes" id="UP000008536">
    <property type="component" value="Chromosome E"/>
</dbReference>
<dbReference type="GO" id="GO:0005787">
    <property type="term" value="C:signal peptidase complex"/>
    <property type="evidence" value="ECO:0007669"/>
    <property type="project" value="UniProtKB-ARBA"/>
</dbReference>
<dbReference type="GO" id="GO:0004252">
    <property type="term" value="F:serine-type endopeptidase activity"/>
    <property type="evidence" value="ECO:0007669"/>
    <property type="project" value="UniProtKB-EC"/>
</dbReference>
<dbReference type="GO" id="GO:0006465">
    <property type="term" value="P:signal peptide processing"/>
    <property type="evidence" value="ECO:0007669"/>
    <property type="project" value="InterPro"/>
</dbReference>
<dbReference type="CDD" id="cd06530">
    <property type="entry name" value="S26_SPase_I"/>
    <property type="match status" value="1"/>
</dbReference>
<dbReference type="InterPro" id="IPR036286">
    <property type="entry name" value="LexA/Signal_pep-like_sf"/>
</dbReference>
<dbReference type="InterPro" id="IPR019756">
    <property type="entry name" value="Pept_S26A_signal_pept_1_Ser-AS"/>
</dbReference>
<dbReference type="InterPro" id="IPR015927">
    <property type="entry name" value="Peptidase_S24_S26A/B/C"/>
</dbReference>
<dbReference type="InterPro" id="IPR019533">
    <property type="entry name" value="Peptidase_S26"/>
</dbReference>
<dbReference type="InterPro" id="IPR001733">
    <property type="entry name" value="Peptidase_S26B"/>
</dbReference>
<dbReference type="NCBIfam" id="TIGR02228">
    <property type="entry name" value="sigpep_I_arch"/>
    <property type="match status" value="1"/>
</dbReference>
<dbReference type="PANTHER" id="PTHR10806">
    <property type="entry name" value="SIGNAL PEPTIDASE COMPLEX CATALYTIC SUBUNIT SEC11"/>
    <property type="match status" value="1"/>
</dbReference>
<dbReference type="PANTHER" id="PTHR10806:SF6">
    <property type="entry name" value="SIGNAL PEPTIDASE COMPLEX CATALYTIC SUBUNIT SEC11"/>
    <property type="match status" value="1"/>
</dbReference>
<dbReference type="Pfam" id="PF00717">
    <property type="entry name" value="Peptidase_S24"/>
    <property type="match status" value="1"/>
</dbReference>
<dbReference type="PRINTS" id="PR00728">
    <property type="entry name" value="SIGNALPTASE"/>
</dbReference>
<dbReference type="SUPFAM" id="SSF51306">
    <property type="entry name" value="LexA/Signal peptidase"/>
    <property type="match status" value="1"/>
</dbReference>
<dbReference type="PROSITE" id="PS00501">
    <property type="entry name" value="SPASE_I_1"/>
    <property type="match status" value="1"/>
</dbReference>
<accession>C5E3W1</accession>
<proteinExistence type="inferred from homology"/>
<protein>
    <recommendedName>
        <fullName>Signal peptidase complex catalytic subunit SEC11</fullName>
        <ecNumber evidence="1">3.4.21.89</ecNumber>
    </recommendedName>
    <alternativeName>
        <fullName>Signal peptidase I</fullName>
    </alternativeName>
</protein>
<sequence length="167" mass="19009">MNLRLELTRFLKLCFVLSSAFMFWKGLSIATNSHSPIVVVLSGSMEPAFQRGDVLFLWNRNERSKVGDVVIYEVQDKSIPIVHRVLREHHNDKNKQLLLTKGDNNAGDDIPLYGRKKIYLQKERDIVGTVKGYVPQLGYVTIWISENKYAKLALMGFLGISALLSNE</sequence>
<gene>
    <name type="primary">SEC11</name>
    <name type="ordered locus">ZYRO0E00704g</name>
</gene>
<feature type="chain" id="PRO_0000412373" description="Signal peptidase complex catalytic subunit SEC11">
    <location>
        <begin position="1"/>
        <end position="167"/>
    </location>
</feature>
<feature type="topological domain" description="Cytoplasmic" evidence="3">
    <location>
        <begin position="1"/>
        <end position="12"/>
    </location>
</feature>
<feature type="transmembrane region" description="Helical; Signal-anchor for type II membrane protein" evidence="3">
    <location>
        <begin position="13"/>
        <end position="30"/>
    </location>
</feature>
<feature type="topological domain" description="Lumenal" evidence="3">
    <location>
        <begin position="31"/>
        <end position="167"/>
    </location>
</feature>
<feature type="region of interest" description="C-terminal short (CTS) helix" evidence="2">
    <location>
        <begin position="153"/>
        <end position="164"/>
    </location>
</feature>
<feature type="active site" description="Charge relay system" evidence="1">
    <location>
        <position position="44"/>
    </location>
</feature>
<feature type="active site" description="Charge relay system" evidence="1">
    <location>
        <position position="83"/>
    </location>
</feature>
<feature type="active site" description="Charge relay system" evidence="1">
    <location>
        <position position="109"/>
    </location>
</feature>